<reference key="1">
    <citation type="journal article" date="2010" name="Genome Biol.">
        <title>Structure and dynamics of the pan-genome of Streptococcus pneumoniae and closely related species.</title>
        <authorList>
            <person name="Donati C."/>
            <person name="Hiller N.L."/>
            <person name="Tettelin H."/>
            <person name="Muzzi A."/>
            <person name="Croucher N.J."/>
            <person name="Angiuoli S.V."/>
            <person name="Oggioni M."/>
            <person name="Dunning Hotopp J.C."/>
            <person name="Hu F.Z."/>
            <person name="Riley D.R."/>
            <person name="Covacci A."/>
            <person name="Mitchell T.J."/>
            <person name="Bentley S.D."/>
            <person name="Kilian M."/>
            <person name="Ehrlich G.D."/>
            <person name="Rappuoli R."/>
            <person name="Moxon E.R."/>
            <person name="Masignani V."/>
        </authorList>
    </citation>
    <scope>NUCLEOTIDE SEQUENCE [LARGE SCALE GENOMIC DNA]</scope>
    <source>
        <strain>Taiwan19F-14</strain>
    </source>
</reference>
<gene>
    <name evidence="1" type="primary">rpoE</name>
    <name type="ordered locus">SPT_0532</name>
</gene>
<protein>
    <recommendedName>
        <fullName evidence="1">Probable DNA-directed RNA polymerase subunit delta</fullName>
    </recommendedName>
    <alternativeName>
        <fullName evidence="1">RNAP delta factor</fullName>
    </alternativeName>
</protein>
<evidence type="ECO:0000255" key="1">
    <source>
        <dbReference type="HAMAP-Rule" id="MF_00357"/>
    </source>
</evidence>
<evidence type="ECO:0000255" key="2">
    <source>
        <dbReference type="PROSITE-ProRule" id="PRU01261"/>
    </source>
</evidence>
<evidence type="ECO:0000256" key="3">
    <source>
        <dbReference type="SAM" id="MobiDB-lite"/>
    </source>
</evidence>
<sequence length="195" mass="22125">MELEVFAGQEKSELSMIEVARAILELRGRDHEMHFSDLVNEIQNYLGTSNSDIREALPLFYTELNFDGSFISLGDNKWGLRSWYGVDEIDEEIIALEENDDDEVAPKAKKKRVNAFMDGDSDAIDYNADDPEDEDAYEADPALSYDDENPDDEKNEVEAYDAEINEIAPDDLGEDVDLNEDDDEFSDDDAETSEE</sequence>
<comment type="function">
    <text evidence="1">Participates in both the initiation and recycling phases of transcription. In the presence of the delta subunit, RNAP displays an increased specificity of transcription, a decreased affinity for nucleic acids, and an increased efficiency of RNA synthesis because of enhanced recycling.</text>
</comment>
<comment type="subunit">
    <text evidence="1">RNAP is composed of a core of 2 alpha, a beta and a beta' subunits. The core is associated with a delta subunit and one of several sigma factors.</text>
</comment>
<comment type="similarity">
    <text evidence="1">Belongs to the RpoE family.</text>
</comment>
<dbReference type="EMBL" id="CP000921">
    <property type="protein sequence ID" value="ACO23546.1"/>
    <property type="molecule type" value="Genomic_DNA"/>
</dbReference>
<dbReference type="RefSeq" id="WP_000418402.1">
    <property type="nucleotide sequence ID" value="NC_012469.1"/>
</dbReference>
<dbReference type="SMR" id="C1CQ00"/>
<dbReference type="GeneID" id="45652070"/>
<dbReference type="KEGG" id="snt:SPT_0532"/>
<dbReference type="HOGENOM" id="CLU_116648_0_0_9"/>
<dbReference type="GO" id="GO:0000428">
    <property type="term" value="C:DNA-directed RNA polymerase complex"/>
    <property type="evidence" value="ECO:0007669"/>
    <property type="project" value="UniProtKB-KW"/>
</dbReference>
<dbReference type="GO" id="GO:0003899">
    <property type="term" value="F:DNA-directed RNA polymerase activity"/>
    <property type="evidence" value="ECO:0007669"/>
    <property type="project" value="UniProtKB-UniRule"/>
</dbReference>
<dbReference type="GO" id="GO:0006351">
    <property type="term" value="P:DNA-templated transcription"/>
    <property type="evidence" value="ECO:0007669"/>
    <property type="project" value="InterPro"/>
</dbReference>
<dbReference type="GO" id="GO:0006355">
    <property type="term" value="P:regulation of DNA-templated transcription"/>
    <property type="evidence" value="ECO:0007669"/>
    <property type="project" value="UniProtKB-UniRule"/>
</dbReference>
<dbReference type="Gene3D" id="1.10.10.1250">
    <property type="entry name" value="RNA polymerase, subunit delta, N-terminal domain"/>
    <property type="match status" value="1"/>
</dbReference>
<dbReference type="HAMAP" id="MF_00357">
    <property type="entry name" value="RNApol_bact_RpoE"/>
    <property type="match status" value="1"/>
</dbReference>
<dbReference type="InterPro" id="IPR007759">
    <property type="entry name" value="Asxl_HARE-HTH"/>
</dbReference>
<dbReference type="InterPro" id="IPR038087">
    <property type="entry name" value="RNAP_delta_N_dom_sf"/>
</dbReference>
<dbReference type="InterPro" id="IPR029757">
    <property type="entry name" value="RpoE"/>
</dbReference>
<dbReference type="NCBIfam" id="TIGR04567">
    <property type="entry name" value="RNAP_delt_lowGC"/>
    <property type="match status" value="1"/>
</dbReference>
<dbReference type="Pfam" id="PF05066">
    <property type="entry name" value="HARE-HTH"/>
    <property type="match status" value="1"/>
</dbReference>
<dbReference type="PROSITE" id="PS51913">
    <property type="entry name" value="HTH_HARE"/>
    <property type="match status" value="1"/>
</dbReference>
<name>RPOE_STRZT</name>
<keyword id="KW-0240">DNA-directed RNA polymerase</keyword>
<keyword id="KW-0548">Nucleotidyltransferase</keyword>
<keyword id="KW-0804">Transcription</keyword>
<keyword id="KW-0808">Transferase</keyword>
<feature type="chain" id="PRO_1000133455" description="Probable DNA-directed RNA polymerase subunit delta">
    <location>
        <begin position="1"/>
        <end position="195"/>
    </location>
</feature>
<feature type="domain" description="HTH HARE-type" evidence="2">
    <location>
        <begin position="14"/>
        <end position="83"/>
    </location>
</feature>
<feature type="region of interest" description="Disordered" evidence="3">
    <location>
        <begin position="120"/>
        <end position="195"/>
    </location>
</feature>
<feature type="compositionally biased region" description="Acidic residues" evidence="3">
    <location>
        <begin position="120"/>
        <end position="138"/>
    </location>
</feature>
<feature type="compositionally biased region" description="Acidic residues" evidence="3">
    <location>
        <begin position="145"/>
        <end position="195"/>
    </location>
</feature>
<proteinExistence type="inferred from homology"/>
<organism>
    <name type="scientific">Streptococcus pneumoniae (strain Taiwan19F-14)</name>
    <dbReference type="NCBI Taxonomy" id="487213"/>
    <lineage>
        <taxon>Bacteria</taxon>
        <taxon>Bacillati</taxon>
        <taxon>Bacillota</taxon>
        <taxon>Bacilli</taxon>
        <taxon>Lactobacillales</taxon>
        <taxon>Streptococcaceae</taxon>
        <taxon>Streptococcus</taxon>
    </lineage>
</organism>
<accession>C1CQ00</accession>